<organism>
    <name type="scientific">Psychromonas ingrahamii (strain DSM 17664 / CCUG 51855 / 37)</name>
    <dbReference type="NCBI Taxonomy" id="357804"/>
    <lineage>
        <taxon>Bacteria</taxon>
        <taxon>Pseudomonadati</taxon>
        <taxon>Pseudomonadota</taxon>
        <taxon>Gammaproteobacteria</taxon>
        <taxon>Alteromonadales</taxon>
        <taxon>Psychromonadaceae</taxon>
        <taxon>Psychromonas</taxon>
    </lineage>
</organism>
<feature type="chain" id="PRO_1000010635" description="Peptidyl-tRNA hydrolase">
    <location>
        <begin position="1"/>
        <end position="197"/>
    </location>
</feature>
<feature type="active site" description="Proton acceptor" evidence="1">
    <location>
        <position position="23"/>
    </location>
</feature>
<feature type="binding site" evidence="1">
    <location>
        <position position="18"/>
    </location>
    <ligand>
        <name>tRNA</name>
        <dbReference type="ChEBI" id="CHEBI:17843"/>
    </ligand>
</feature>
<feature type="binding site" evidence="1">
    <location>
        <position position="69"/>
    </location>
    <ligand>
        <name>tRNA</name>
        <dbReference type="ChEBI" id="CHEBI:17843"/>
    </ligand>
</feature>
<feature type="binding site" evidence="1">
    <location>
        <position position="71"/>
    </location>
    <ligand>
        <name>tRNA</name>
        <dbReference type="ChEBI" id="CHEBI:17843"/>
    </ligand>
</feature>
<feature type="binding site" evidence="1">
    <location>
        <position position="117"/>
    </location>
    <ligand>
        <name>tRNA</name>
        <dbReference type="ChEBI" id="CHEBI:17843"/>
    </ligand>
</feature>
<feature type="site" description="Discriminates between blocked and unblocked aminoacyl-tRNA" evidence="1">
    <location>
        <position position="13"/>
    </location>
</feature>
<feature type="site" description="Stabilizes the basic form of H active site to accept a proton" evidence="1">
    <location>
        <position position="96"/>
    </location>
</feature>
<dbReference type="EC" id="3.1.1.29" evidence="1"/>
<dbReference type="EMBL" id="CP000510">
    <property type="protein sequence ID" value="ABM02751.1"/>
    <property type="molecule type" value="Genomic_DNA"/>
</dbReference>
<dbReference type="RefSeq" id="WP_011769314.1">
    <property type="nucleotide sequence ID" value="NC_008709.1"/>
</dbReference>
<dbReference type="SMR" id="A1STD6"/>
<dbReference type="STRING" id="357804.Ping_0909"/>
<dbReference type="KEGG" id="pin:Ping_0909"/>
<dbReference type="eggNOG" id="COG0193">
    <property type="taxonomic scope" value="Bacteria"/>
</dbReference>
<dbReference type="HOGENOM" id="CLU_062456_3_1_6"/>
<dbReference type="OrthoDB" id="9800507at2"/>
<dbReference type="Proteomes" id="UP000000639">
    <property type="component" value="Chromosome"/>
</dbReference>
<dbReference type="GO" id="GO:0005737">
    <property type="term" value="C:cytoplasm"/>
    <property type="evidence" value="ECO:0007669"/>
    <property type="project" value="UniProtKB-SubCell"/>
</dbReference>
<dbReference type="GO" id="GO:0004045">
    <property type="term" value="F:peptidyl-tRNA hydrolase activity"/>
    <property type="evidence" value="ECO:0007669"/>
    <property type="project" value="UniProtKB-UniRule"/>
</dbReference>
<dbReference type="GO" id="GO:0000049">
    <property type="term" value="F:tRNA binding"/>
    <property type="evidence" value="ECO:0007669"/>
    <property type="project" value="UniProtKB-UniRule"/>
</dbReference>
<dbReference type="GO" id="GO:0006515">
    <property type="term" value="P:protein quality control for misfolded or incompletely synthesized proteins"/>
    <property type="evidence" value="ECO:0007669"/>
    <property type="project" value="UniProtKB-UniRule"/>
</dbReference>
<dbReference type="GO" id="GO:0072344">
    <property type="term" value="P:rescue of stalled ribosome"/>
    <property type="evidence" value="ECO:0007669"/>
    <property type="project" value="UniProtKB-UniRule"/>
</dbReference>
<dbReference type="CDD" id="cd00462">
    <property type="entry name" value="PTH"/>
    <property type="match status" value="1"/>
</dbReference>
<dbReference type="FunFam" id="3.40.50.1470:FF:000001">
    <property type="entry name" value="Peptidyl-tRNA hydrolase"/>
    <property type="match status" value="1"/>
</dbReference>
<dbReference type="Gene3D" id="3.40.50.1470">
    <property type="entry name" value="Peptidyl-tRNA hydrolase"/>
    <property type="match status" value="1"/>
</dbReference>
<dbReference type="HAMAP" id="MF_00083">
    <property type="entry name" value="Pept_tRNA_hydro_bact"/>
    <property type="match status" value="1"/>
</dbReference>
<dbReference type="InterPro" id="IPR001328">
    <property type="entry name" value="Pept_tRNA_hydro"/>
</dbReference>
<dbReference type="InterPro" id="IPR018171">
    <property type="entry name" value="Pept_tRNA_hydro_CS"/>
</dbReference>
<dbReference type="InterPro" id="IPR036416">
    <property type="entry name" value="Pept_tRNA_hydro_sf"/>
</dbReference>
<dbReference type="NCBIfam" id="TIGR00447">
    <property type="entry name" value="pth"/>
    <property type="match status" value="1"/>
</dbReference>
<dbReference type="PANTHER" id="PTHR17224">
    <property type="entry name" value="PEPTIDYL-TRNA HYDROLASE"/>
    <property type="match status" value="1"/>
</dbReference>
<dbReference type="PANTHER" id="PTHR17224:SF1">
    <property type="entry name" value="PEPTIDYL-TRNA HYDROLASE"/>
    <property type="match status" value="1"/>
</dbReference>
<dbReference type="Pfam" id="PF01195">
    <property type="entry name" value="Pept_tRNA_hydro"/>
    <property type="match status" value="1"/>
</dbReference>
<dbReference type="SUPFAM" id="SSF53178">
    <property type="entry name" value="Peptidyl-tRNA hydrolase-like"/>
    <property type="match status" value="1"/>
</dbReference>
<dbReference type="PROSITE" id="PS01196">
    <property type="entry name" value="PEPT_TRNA_HYDROL_2"/>
    <property type="match status" value="1"/>
</dbReference>
<proteinExistence type="inferred from homology"/>
<accession>A1STD6</accession>
<name>PTH_PSYIN</name>
<evidence type="ECO:0000255" key="1">
    <source>
        <dbReference type="HAMAP-Rule" id="MF_00083"/>
    </source>
</evidence>
<comment type="function">
    <text evidence="1">Hydrolyzes ribosome-free peptidyl-tRNAs (with 1 or more amino acids incorporated), which drop off the ribosome during protein synthesis, or as a result of ribosome stalling.</text>
</comment>
<comment type="function">
    <text evidence="1">Catalyzes the release of premature peptidyl moieties from peptidyl-tRNA molecules trapped in stalled 50S ribosomal subunits, and thus maintains levels of free tRNAs and 50S ribosomes.</text>
</comment>
<comment type="catalytic activity">
    <reaction evidence="1">
        <text>an N-acyl-L-alpha-aminoacyl-tRNA + H2O = an N-acyl-L-amino acid + a tRNA + H(+)</text>
        <dbReference type="Rhea" id="RHEA:54448"/>
        <dbReference type="Rhea" id="RHEA-COMP:10123"/>
        <dbReference type="Rhea" id="RHEA-COMP:13883"/>
        <dbReference type="ChEBI" id="CHEBI:15377"/>
        <dbReference type="ChEBI" id="CHEBI:15378"/>
        <dbReference type="ChEBI" id="CHEBI:59874"/>
        <dbReference type="ChEBI" id="CHEBI:78442"/>
        <dbReference type="ChEBI" id="CHEBI:138191"/>
        <dbReference type="EC" id="3.1.1.29"/>
    </reaction>
</comment>
<comment type="subunit">
    <text evidence="1">Monomer.</text>
</comment>
<comment type="subcellular location">
    <subcellularLocation>
        <location evidence="1">Cytoplasm</location>
    </subcellularLocation>
</comment>
<comment type="similarity">
    <text evidence="1">Belongs to the PTH family.</text>
</comment>
<sequence length="197" mass="21633">MSITIKLLVGLANPGPEYAQTRHNAGQWYVSQLASQENIQLKAEPKFYGLTGRIQFAGNDLRLLVPTTFMNLSGKAVAAMANFYRIKPEEILIAHDELDLLPGIAKFKLGGGHGGHNGLKDIIQKLGNDKNFYRLRIGIGHPGDKNRVSGYVLGKAPSSEQNLIDQSIDEAARCTHILGQDGLEKAMNRLHSFKAEK</sequence>
<reference key="1">
    <citation type="journal article" date="2008" name="BMC Genomics">
        <title>Genomics of an extreme psychrophile, Psychromonas ingrahamii.</title>
        <authorList>
            <person name="Riley M."/>
            <person name="Staley J.T."/>
            <person name="Danchin A."/>
            <person name="Wang T.Z."/>
            <person name="Brettin T.S."/>
            <person name="Hauser L.J."/>
            <person name="Land M.L."/>
            <person name="Thompson L.S."/>
        </authorList>
    </citation>
    <scope>NUCLEOTIDE SEQUENCE [LARGE SCALE GENOMIC DNA]</scope>
    <source>
        <strain>DSM 17664 / CCUG 51855 / 37</strain>
    </source>
</reference>
<keyword id="KW-0963">Cytoplasm</keyword>
<keyword id="KW-0378">Hydrolase</keyword>
<keyword id="KW-1185">Reference proteome</keyword>
<keyword id="KW-0694">RNA-binding</keyword>
<keyword id="KW-0820">tRNA-binding</keyword>
<protein>
    <recommendedName>
        <fullName evidence="1">Peptidyl-tRNA hydrolase</fullName>
        <shortName evidence="1">Pth</shortName>
        <ecNumber evidence="1">3.1.1.29</ecNumber>
    </recommendedName>
</protein>
<gene>
    <name evidence="1" type="primary">pth</name>
    <name type="ordered locus">Ping_0909</name>
</gene>